<keyword id="KW-0460">Magnesium</keyword>
<keyword id="KW-0464">Manganese</keyword>
<keyword id="KW-0474">Menaquinone biosynthesis</keyword>
<keyword id="KW-0479">Metal-binding</keyword>
<keyword id="KW-0786">Thiamine pyrophosphate</keyword>
<keyword id="KW-0808">Transferase</keyword>
<dbReference type="EC" id="2.2.1.9" evidence="1"/>
<dbReference type="EMBL" id="CP001144">
    <property type="protein sequence ID" value="ACH74716.1"/>
    <property type="molecule type" value="Genomic_DNA"/>
</dbReference>
<dbReference type="RefSeq" id="WP_000116384.1">
    <property type="nucleotide sequence ID" value="NC_011205.1"/>
</dbReference>
<dbReference type="SMR" id="B5FPE8"/>
<dbReference type="KEGG" id="sed:SeD_A2653"/>
<dbReference type="HOGENOM" id="CLU_006051_3_0_6"/>
<dbReference type="UniPathway" id="UPA00079"/>
<dbReference type="UniPathway" id="UPA01057">
    <property type="reaction ID" value="UER00164"/>
</dbReference>
<dbReference type="Proteomes" id="UP000008322">
    <property type="component" value="Chromosome"/>
</dbReference>
<dbReference type="GO" id="GO:0070204">
    <property type="term" value="F:2-succinyl-5-enolpyruvyl-6-hydroxy-3-cyclohexene-1-carboxylic-acid synthase activity"/>
    <property type="evidence" value="ECO:0007669"/>
    <property type="project" value="UniProtKB-UniRule"/>
</dbReference>
<dbReference type="GO" id="GO:0000287">
    <property type="term" value="F:magnesium ion binding"/>
    <property type="evidence" value="ECO:0007669"/>
    <property type="project" value="UniProtKB-UniRule"/>
</dbReference>
<dbReference type="GO" id="GO:0030145">
    <property type="term" value="F:manganese ion binding"/>
    <property type="evidence" value="ECO:0007669"/>
    <property type="project" value="UniProtKB-UniRule"/>
</dbReference>
<dbReference type="GO" id="GO:0030976">
    <property type="term" value="F:thiamine pyrophosphate binding"/>
    <property type="evidence" value="ECO:0007669"/>
    <property type="project" value="UniProtKB-UniRule"/>
</dbReference>
<dbReference type="GO" id="GO:0009234">
    <property type="term" value="P:menaquinone biosynthetic process"/>
    <property type="evidence" value="ECO:0007669"/>
    <property type="project" value="UniProtKB-UniRule"/>
</dbReference>
<dbReference type="CDD" id="cd07037">
    <property type="entry name" value="TPP_PYR_MenD"/>
    <property type="match status" value="1"/>
</dbReference>
<dbReference type="CDD" id="cd02009">
    <property type="entry name" value="TPP_SHCHC_synthase"/>
    <property type="match status" value="1"/>
</dbReference>
<dbReference type="FunFam" id="3.40.50.1220:FF:000010">
    <property type="entry name" value="2-succinyl-5-enolpyruvyl-6-hydroxy-3-cyclohexene-1-carboxylate synthase"/>
    <property type="match status" value="1"/>
</dbReference>
<dbReference type="FunFam" id="3.40.50.970:FF:000029">
    <property type="entry name" value="2-succinyl-5-enolpyruvyl-6-hydroxy-3-cyclohexene-1-carboxylate synthase"/>
    <property type="match status" value="1"/>
</dbReference>
<dbReference type="Gene3D" id="3.40.50.970">
    <property type="match status" value="2"/>
</dbReference>
<dbReference type="Gene3D" id="3.40.50.1220">
    <property type="entry name" value="TPP-binding domain"/>
    <property type="match status" value="1"/>
</dbReference>
<dbReference type="HAMAP" id="MF_01659">
    <property type="entry name" value="MenD"/>
    <property type="match status" value="1"/>
</dbReference>
<dbReference type="InterPro" id="IPR004433">
    <property type="entry name" value="MenaQ_synth_MenD"/>
</dbReference>
<dbReference type="InterPro" id="IPR032264">
    <property type="entry name" value="MenD_middle"/>
</dbReference>
<dbReference type="InterPro" id="IPR029061">
    <property type="entry name" value="THDP-binding"/>
</dbReference>
<dbReference type="InterPro" id="IPR012001">
    <property type="entry name" value="Thiamin_PyroP_enz_TPP-bd_dom"/>
</dbReference>
<dbReference type="InterPro" id="IPR011766">
    <property type="entry name" value="TPP_enzyme_TPP-bd"/>
</dbReference>
<dbReference type="NCBIfam" id="TIGR00173">
    <property type="entry name" value="menD"/>
    <property type="match status" value="1"/>
</dbReference>
<dbReference type="PANTHER" id="PTHR42916">
    <property type="entry name" value="2-SUCCINYL-5-ENOLPYRUVYL-6-HYDROXY-3-CYCLOHEXENE-1-CARBOXYLATE SYNTHASE"/>
    <property type="match status" value="1"/>
</dbReference>
<dbReference type="PANTHER" id="PTHR42916:SF1">
    <property type="entry name" value="PROTEIN PHYLLO, CHLOROPLASTIC"/>
    <property type="match status" value="1"/>
</dbReference>
<dbReference type="Pfam" id="PF02775">
    <property type="entry name" value="TPP_enzyme_C"/>
    <property type="match status" value="1"/>
</dbReference>
<dbReference type="Pfam" id="PF16582">
    <property type="entry name" value="TPP_enzyme_M_2"/>
    <property type="match status" value="1"/>
</dbReference>
<dbReference type="Pfam" id="PF02776">
    <property type="entry name" value="TPP_enzyme_N"/>
    <property type="match status" value="1"/>
</dbReference>
<dbReference type="PIRSF" id="PIRSF004983">
    <property type="entry name" value="MenD"/>
    <property type="match status" value="1"/>
</dbReference>
<dbReference type="SUPFAM" id="SSF52518">
    <property type="entry name" value="Thiamin diphosphate-binding fold (THDP-binding)"/>
    <property type="match status" value="2"/>
</dbReference>
<accession>B5FPE8</accession>
<protein>
    <recommendedName>
        <fullName evidence="1">2-succinyl-5-enolpyruvyl-6-hydroxy-3-cyclohexene-1-carboxylate synthase</fullName>
        <shortName evidence="1">SEPHCHC synthase</shortName>
        <ecNumber evidence="1">2.2.1.9</ecNumber>
    </recommendedName>
    <alternativeName>
        <fullName evidence="1">Menaquinone biosynthesis protein MenD</fullName>
    </alternativeName>
</protein>
<comment type="function">
    <text evidence="1">Catalyzes the thiamine diphosphate-dependent decarboxylation of 2-oxoglutarate and the subsequent addition of the resulting succinic semialdehyde-thiamine pyrophosphate anion to isochorismate to yield 2-succinyl-5-enolpyruvyl-6-hydroxy-3-cyclohexene-1-carboxylate (SEPHCHC).</text>
</comment>
<comment type="catalytic activity">
    <reaction evidence="1">
        <text>isochorismate + 2-oxoglutarate + H(+) = 5-enolpyruvoyl-6-hydroxy-2-succinyl-cyclohex-3-ene-1-carboxylate + CO2</text>
        <dbReference type="Rhea" id="RHEA:25593"/>
        <dbReference type="ChEBI" id="CHEBI:15378"/>
        <dbReference type="ChEBI" id="CHEBI:16526"/>
        <dbReference type="ChEBI" id="CHEBI:16810"/>
        <dbReference type="ChEBI" id="CHEBI:29780"/>
        <dbReference type="ChEBI" id="CHEBI:58818"/>
        <dbReference type="EC" id="2.2.1.9"/>
    </reaction>
</comment>
<comment type="cofactor">
    <cofactor evidence="1">
        <name>Mg(2+)</name>
        <dbReference type="ChEBI" id="CHEBI:18420"/>
    </cofactor>
    <cofactor evidence="1">
        <name>Mn(2+)</name>
        <dbReference type="ChEBI" id="CHEBI:29035"/>
    </cofactor>
</comment>
<comment type="cofactor">
    <cofactor evidence="1">
        <name>thiamine diphosphate</name>
        <dbReference type="ChEBI" id="CHEBI:58937"/>
    </cofactor>
    <text evidence="1">Binds 1 thiamine pyrophosphate per subunit.</text>
</comment>
<comment type="pathway">
    <text evidence="1">Quinol/quinone metabolism; 1,4-dihydroxy-2-naphthoate biosynthesis; 1,4-dihydroxy-2-naphthoate from chorismate: step 2/7.</text>
</comment>
<comment type="pathway">
    <text evidence="1">Quinol/quinone metabolism; menaquinone biosynthesis.</text>
</comment>
<comment type="subunit">
    <text evidence="1">Homodimer.</text>
</comment>
<comment type="similarity">
    <text evidence="1">Belongs to the TPP enzyme family. MenD subfamily.</text>
</comment>
<sequence>MSVSAFNRRWAAVILEALTRHGVRHVCIAPGSRSTPLTLAAAENPAFIHHTHFDERGLGHLALGLAKVSQQPVAVIVTSGTAVANLYPALIEAGLTGEKLILLTADRPPELIDCGANQAIRQAGMFASHPSQTLSLPRPTQDIPARWLVSTIDNALAMLHAGALHINCPFAEPLYGDMNDTGLVWQQRLGDWWQDEKPWLREARRLASDKQRDWFFWRQKRGVVVAGRMSAEEGKKVAQWAQTLGWPLIGDVLSQTGQPLPCADLWLGNAKAVTELQQAQIVVQLGSSLTGKRLLQWQATCEPEEYWVIDNIEGRLDPAHHRGRRLVAKIADWLEMHPAEKRKPWCVEIPRLAELAWQRVVAQRDTFGEAQLAHRIRDYLPEQGQLFVGNSLVVRLIDALSQLPAGYPVYSNRGASGIDGLLSTAAGVQRASAKSTLAIVGDLSALYDLNALALLRQVSAPFVLIVVNNNGGQIFSLLPTPQSKRERFYLMPQNVHFDHAAAMFNLRYHRPENWEELESALAGAWRTPATTVIELVVNDTDGAQTLQQLLAQVSHL</sequence>
<proteinExistence type="inferred from homology"/>
<name>MEND_SALDC</name>
<evidence type="ECO:0000255" key="1">
    <source>
        <dbReference type="HAMAP-Rule" id="MF_01659"/>
    </source>
</evidence>
<gene>
    <name evidence="1" type="primary">menD</name>
    <name type="ordered locus">SeD_A2653</name>
</gene>
<reference key="1">
    <citation type="journal article" date="2011" name="J. Bacteriol.">
        <title>Comparative genomics of 28 Salmonella enterica isolates: evidence for CRISPR-mediated adaptive sublineage evolution.</title>
        <authorList>
            <person name="Fricke W.F."/>
            <person name="Mammel M.K."/>
            <person name="McDermott P.F."/>
            <person name="Tartera C."/>
            <person name="White D.G."/>
            <person name="Leclerc J.E."/>
            <person name="Ravel J."/>
            <person name="Cebula T.A."/>
        </authorList>
    </citation>
    <scope>NUCLEOTIDE SEQUENCE [LARGE SCALE GENOMIC DNA]</scope>
    <source>
        <strain>CT_02021853</strain>
    </source>
</reference>
<organism>
    <name type="scientific">Salmonella dublin (strain CT_02021853)</name>
    <dbReference type="NCBI Taxonomy" id="439851"/>
    <lineage>
        <taxon>Bacteria</taxon>
        <taxon>Pseudomonadati</taxon>
        <taxon>Pseudomonadota</taxon>
        <taxon>Gammaproteobacteria</taxon>
        <taxon>Enterobacterales</taxon>
        <taxon>Enterobacteriaceae</taxon>
        <taxon>Salmonella</taxon>
    </lineage>
</organism>
<feature type="chain" id="PRO_1000187089" description="2-succinyl-5-enolpyruvyl-6-hydroxy-3-cyclohexene-1-carboxylate synthase">
    <location>
        <begin position="1"/>
        <end position="556"/>
    </location>
</feature>